<protein>
    <recommendedName>
        <fullName evidence="1">Proline--tRNA ligase</fullName>
        <ecNumber evidence="1">6.1.1.15</ecNumber>
    </recommendedName>
    <alternativeName>
        <fullName evidence="1">Prolyl-tRNA synthetase</fullName>
        <shortName evidence="1">ProRS</shortName>
    </alternativeName>
</protein>
<name>SYP_PROM1</name>
<feature type="chain" id="PRO_0000288365" description="Proline--tRNA ligase">
    <location>
        <begin position="1"/>
        <end position="596"/>
    </location>
</feature>
<accession>A2C0W8</accession>
<organism>
    <name type="scientific">Prochlorococcus marinus (strain NATL1A)</name>
    <dbReference type="NCBI Taxonomy" id="167555"/>
    <lineage>
        <taxon>Bacteria</taxon>
        <taxon>Bacillati</taxon>
        <taxon>Cyanobacteriota</taxon>
        <taxon>Cyanophyceae</taxon>
        <taxon>Synechococcales</taxon>
        <taxon>Prochlorococcaceae</taxon>
        <taxon>Prochlorococcus</taxon>
    </lineage>
</organism>
<proteinExistence type="inferred from homology"/>
<sequence length="596" mass="67643">MRVSRLMLNTLRDVPSEADIISHQLLVRGGYIKRITGGIYAYMPLLWKVLKKITSIVEEELSTKGCLQTLLPQLQPSEIWERSGRWKSYTQGEGIMFSLKDRQGKELGLGPTHEEVITQIISQTIHSYKQLPINIFQIQTKFRDEIRPRFGLMRSREFIMKDAYSFHANENDLQSTYSDMRNAYQNIFTKCGLDFVCVDADSGAIGGAASQEFMVTAESGEDLILISSDGKYGANQEKAVSIIEEGNLLEPNKPSIIKTPNQKTIDELCNYNDFHPSQIVKVLAYLATCDDNKKYPVLVSIRGDQEINDIKLSNKISQELKKNVLDIRIIYNEDMQKQGITNIPFGFIGPDLSDNLLAQSKGWEKKFIRIADNSAKDLKSFICGNNIKDEHKIFYNWNLINTVQLICDIRKAKPGDRCIHDKTQKLEECRGIEIGHIFQLGTKYSKSLNATFTNEKGIEDHLWMGCYGIGISRLAQAAVEQNHDDLGIIWPTSIAPFTVIIIIANIKNNDQKCLAEDIYQKLIQNRVDVLLDDRDDRAGIKFKDADLIGIPWRIVAGREASSGLVELHNRKTKTTELLDLNSVLKKLSEEFNTEKL</sequence>
<gene>
    <name evidence="1" type="primary">proS</name>
    <name type="ordered locus">NATL1_05661</name>
</gene>
<keyword id="KW-0030">Aminoacyl-tRNA synthetase</keyword>
<keyword id="KW-0067">ATP-binding</keyword>
<keyword id="KW-0963">Cytoplasm</keyword>
<keyword id="KW-0436">Ligase</keyword>
<keyword id="KW-0547">Nucleotide-binding</keyword>
<keyword id="KW-0648">Protein biosynthesis</keyword>
<dbReference type="EC" id="6.1.1.15" evidence="1"/>
<dbReference type="EMBL" id="CP000553">
    <property type="protein sequence ID" value="ABM75128.1"/>
    <property type="molecule type" value="Genomic_DNA"/>
</dbReference>
<dbReference type="RefSeq" id="WP_011823304.1">
    <property type="nucleotide sequence ID" value="NC_008819.1"/>
</dbReference>
<dbReference type="SMR" id="A2C0W8"/>
<dbReference type="KEGG" id="pme:NATL1_05661"/>
<dbReference type="eggNOG" id="COG0442">
    <property type="taxonomic scope" value="Bacteria"/>
</dbReference>
<dbReference type="HOGENOM" id="CLU_016739_0_0_3"/>
<dbReference type="Proteomes" id="UP000002592">
    <property type="component" value="Chromosome"/>
</dbReference>
<dbReference type="GO" id="GO:0005829">
    <property type="term" value="C:cytosol"/>
    <property type="evidence" value="ECO:0007669"/>
    <property type="project" value="TreeGrafter"/>
</dbReference>
<dbReference type="GO" id="GO:0002161">
    <property type="term" value="F:aminoacyl-tRNA deacylase activity"/>
    <property type="evidence" value="ECO:0007669"/>
    <property type="project" value="InterPro"/>
</dbReference>
<dbReference type="GO" id="GO:0005524">
    <property type="term" value="F:ATP binding"/>
    <property type="evidence" value="ECO:0007669"/>
    <property type="project" value="UniProtKB-UniRule"/>
</dbReference>
<dbReference type="GO" id="GO:0004827">
    <property type="term" value="F:proline-tRNA ligase activity"/>
    <property type="evidence" value="ECO:0007669"/>
    <property type="project" value="UniProtKB-UniRule"/>
</dbReference>
<dbReference type="GO" id="GO:0006433">
    <property type="term" value="P:prolyl-tRNA aminoacylation"/>
    <property type="evidence" value="ECO:0007669"/>
    <property type="project" value="UniProtKB-UniRule"/>
</dbReference>
<dbReference type="CDD" id="cd04334">
    <property type="entry name" value="ProRS-INS"/>
    <property type="match status" value="1"/>
</dbReference>
<dbReference type="Gene3D" id="3.40.50.800">
    <property type="entry name" value="Anticodon-binding domain"/>
    <property type="match status" value="1"/>
</dbReference>
<dbReference type="Gene3D" id="3.30.930.10">
    <property type="entry name" value="Bira Bifunctional Protein, Domain 2"/>
    <property type="match status" value="2"/>
</dbReference>
<dbReference type="HAMAP" id="MF_01569">
    <property type="entry name" value="Pro_tRNA_synth_type1"/>
    <property type="match status" value="1"/>
</dbReference>
<dbReference type="InterPro" id="IPR002314">
    <property type="entry name" value="aa-tRNA-synt_IIb"/>
</dbReference>
<dbReference type="InterPro" id="IPR006195">
    <property type="entry name" value="aa-tRNA-synth_II"/>
</dbReference>
<dbReference type="InterPro" id="IPR045864">
    <property type="entry name" value="aa-tRNA-synth_II/BPL/LPL"/>
</dbReference>
<dbReference type="InterPro" id="IPR004154">
    <property type="entry name" value="Anticodon-bd"/>
</dbReference>
<dbReference type="InterPro" id="IPR036621">
    <property type="entry name" value="Anticodon-bd_dom_sf"/>
</dbReference>
<dbReference type="InterPro" id="IPR002316">
    <property type="entry name" value="Pro-tRNA-ligase_IIa"/>
</dbReference>
<dbReference type="InterPro" id="IPR004500">
    <property type="entry name" value="Pro-tRNA-synth_IIa_bac-type"/>
</dbReference>
<dbReference type="InterPro" id="IPR023717">
    <property type="entry name" value="Pro-tRNA-Synthase_IIa_type1"/>
</dbReference>
<dbReference type="InterPro" id="IPR050062">
    <property type="entry name" value="Pro-tRNA_synthetase"/>
</dbReference>
<dbReference type="InterPro" id="IPR036754">
    <property type="entry name" value="YbaK/aa-tRNA-synt-asso_dom_sf"/>
</dbReference>
<dbReference type="InterPro" id="IPR007214">
    <property type="entry name" value="YbaK/aa-tRNA-synth-assoc-dom"/>
</dbReference>
<dbReference type="NCBIfam" id="NF006625">
    <property type="entry name" value="PRK09194.1"/>
    <property type="match status" value="1"/>
</dbReference>
<dbReference type="NCBIfam" id="TIGR00409">
    <property type="entry name" value="proS_fam_II"/>
    <property type="match status" value="1"/>
</dbReference>
<dbReference type="PANTHER" id="PTHR42753">
    <property type="entry name" value="MITOCHONDRIAL RIBOSOME PROTEIN L39/PROLYL-TRNA LIGASE FAMILY MEMBER"/>
    <property type="match status" value="1"/>
</dbReference>
<dbReference type="PANTHER" id="PTHR42753:SF2">
    <property type="entry name" value="PROLINE--TRNA LIGASE"/>
    <property type="match status" value="1"/>
</dbReference>
<dbReference type="Pfam" id="PF03129">
    <property type="entry name" value="HGTP_anticodon"/>
    <property type="match status" value="1"/>
</dbReference>
<dbReference type="Pfam" id="PF00587">
    <property type="entry name" value="tRNA-synt_2b"/>
    <property type="match status" value="1"/>
</dbReference>
<dbReference type="Pfam" id="PF04073">
    <property type="entry name" value="tRNA_edit"/>
    <property type="match status" value="1"/>
</dbReference>
<dbReference type="PRINTS" id="PR01046">
    <property type="entry name" value="TRNASYNTHPRO"/>
</dbReference>
<dbReference type="SUPFAM" id="SSF52954">
    <property type="entry name" value="Class II aaRS ABD-related"/>
    <property type="match status" value="1"/>
</dbReference>
<dbReference type="SUPFAM" id="SSF55681">
    <property type="entry name" value="Class II aaRS and biotin synthetases"/>
    <property type="match status" value="1"/>
</dbReference>
<dbReference type="SUPFAM" id="SSF55826">
    <property type="entry name" value="YbaK/ProRS associated domain"/>
    <property type="match status" value="1"/>
</dbReference>
<dbReference type="PROSITE" id="PS50862">
    <property type="entry name" value="AA_TRNA_LIGASE_II"/>
    <property type="match status" value="1"/>
</dbReference>
<comment type="function">
    <text evidence="1">Catalyzes the attachment of proline to tRNA(Pro) in a two-step reaction: proline is first activated by ATP to form Pro-AMP and then transferred to the acceptor end of tRNA(Pro). As ProRS can inadvertently accommodate and process non-cognate amino acids such as alanine and cysteine, to avoid such errors it has two additional distinct editing activities against alanine. One activity is designated as 'pretransfer' editing and involves the tRNA(Pro)-independent hydrolysis of activated Ala-AMP. The other activity is designated 'posttransfer' editing and involves deacylation of mischarged Ala-tRNA(Pro). The misacylated Cys-tRNA(Pro) is not edited by ProRS.</text>
</comment>
<comment type="catalytic activity">
    <reaction evidence="1">
        <text>tRNA(Pro) + L-proline + ATP = L-prolyl-tRNA(Pro) + AMP + diphosphate</text>
        <dbReference type="Rhea" id="RHEA:14305"/>
        <dbReference type="Rhea" id="RHEA-COMP:9700"/>
        <dbReference type="Rhea" id="RHEA-COMP:9702"/>
        <dbReference type="ChEBI" id="CHEBI:30616"/>
        <dbReference type="ChEBI" id="CHEBI:33019"/>
        <dbReference type="ChEBI" id="CHEBI:60039"/>
        <dbReference type="ChEBI" id="CHEBI:78442"/>
        <dbReference type="ChEBI" id="CHEBI:78532"/>
        <dbReference type="ChEBI" id="CHEBI:456215"/>
        <dbReference type="EC" id="6.1.1.15"/>
    </reaction>
</comment>
<comment type="subunit">
    <text evidence="1">Homodimer.</text>
</comment>
<comment type="subcellular location">
    <subcellularLocation>
        <location evidence="1">Cytoplasm</location>
    </subcellularLocation>
</comment>
<comment type="domain">
    <text evidence="1">Consists of three domains: the N-terminal catalytic domain, the editing domain and the C-terminal anticodon-binding domain.</text>
</comment>
<comment type="similarity">
    <text evidence="1">Belongs to the class-II aminoacyl-tRNA synthetase family. ProS type 1 subfamily.</text>
</comment>
<evidence type="ECO:0000255" key="1">
    <source>
        <dbReference type="HAMAP-Rule" id="MF_01569"/>
    </source>
</evidence>
<reference key="1">
    <citation type="journal article" date="2007" name="PLoS Genet.">
        <title>Patterns and implications of gene gain and loss in the evolution of Prochlorococcus.</title>
        <authorList>
            <person name="Kettler G.C."/>
            <person name="Martiny A.C."/>
            <person name="Huang K."/>
            <person name="Zucker J."/>
            <person name="Coleman M.L."/>
            <person name="Rodrigue S."/>
            <person name="Chen F."/>
            <person name="Lapidus A."/>
            <person name="Ferriera S."/>
            <person name="Johnson J."/>
            <person name="Steglich C."/>
            <person name="Church G.M."/>
            <person name="Richardson P."/>
            <person name="Chisholm S.W."/>
        </authorList>
    </citation>
    <scope>NUCLEOTIDE SEQUENCE [LARGE SCALE GENOMIC DNA]</scope>
    <source>
        <strain>NATL1A</strain>
    </source>
</reference>